<protein>
    <recommendedName>
        <fullName evidence="1">Proline--tRNA ligase</fullName>
        <ecNumber evidence="1">6.1.1.15</ecNumber>
    </recommendedName>
    <alternativeName>
        <fullName evidence="1">Prolyl-tRNA synthetase</fullName>
        <shortName evidence="1">ProRS</shortName>
    </alternativeName>
</protein>
<sequence length="460" mass="53244">MEFSEWYSDILEKAGIYDLRYPIKGCGVYLPYGFKIRRYSFEILRKLLDETGHDETLFPMLIPENLLAKEGEHIKGFEDEVFWVTHGGKTPLEVKLALRPTSETTMYYMMKQWIKVHTDLPLKLYQVVNTFRYETKHTRPLIRLREIMSFKEAHTAHATKEDCDAQIKEALNLYGEFFDEICVPYIISKRPEWDKFPGADYTMAFDTIYPDGKTMQIGTVHNLGQNFAKTFELEFETPDGEKDFVYQTCYGISDRAIASLISVHGDEKGLVIPVDVAPIQIVLIPLLFKGKEEIVMEKIKELNSTLKSEFRVHLDDRDIRPGRKYNDWEIKGVPLRIELGPRDIENGQALIVRRDTGEKITVEYSNILEEVEKIVSMYKENLKIKADEKIKNFLTVVDFESDVNALSEKVKAALLENKGIILIPFDESVYNEEFEELIDASVLGQTTYEGKDYISVARTY</sequence>
<proteinExistence type="inferred from homology"/>
<gene>
    <name evidence="1" type="primary">proS</name>
    <name type="ordered locus">MmarC7_1723</name>
</gene>
<feature type="chain" id="PRO_0000318777" description="Proline--tRNA ligase">
    <location>
        <begin position="1"/>
        <end position="460"/>
    </location>
</feature>
<organism>
    <name type="scientific">Methanococcus maripaludis (strain C7 / ATCC BAA-1331)</name>
    <dbReference type="NCBI Taxonomy" id="426368"/>
    <lineage>
        <taxon>Archaea</taxon>
        <taxon>Methanobacteriati</taxon>
        <taxon>Methanobacteriota</taxon>
        <taxon>Methanomada group</taxon>
        <taxon>Methanococci</taxon>
        <taxon>Methanococcales</taxon>
        <taxon>Methanococcaceae</taxon>
        <taxon>Methanococcus</taxon>
    </lineage>
</organism>
<name>SYP_METM7</name>
<dbReference type="EC" id="6.1.1.15" evidence="1"/>
<dbReference type="EMBL" id="CP000745">
    <property type="protein sequence ID" value="ABR66779.1"/>
    <property type="molecule type" value="Genomic_DNA"/>
</dbReference>
<dbReference type="SMR" id="A6VK03"/>
<dbReference type="STRING" id="426368.MmarC7_1723"/>
<dbReference type="KEGG" id="mmz:MmarC7_1723"/>
<dbReference type="eggNOG" id="arCOG00402">
    <property type="taxonomic scope" value="Archaea"/>
</dbReference>
<dbReference type="HOGENOM" id="CLU_001882_4_2_2"/>
<dbReference type="OrthoDB" id="7375at2157"/>
<dbReference type="GO" id="GO:0017101">
    <property type="term" value="C:aminoacyl-tRNA synthetase multienzyme complex"/>
    <property type="evidence" value="ECO:0007669"/>
    <property type="project" value="TreeGrafter"/>
</dbReference>
<dbReference type="GO" id="GO:0005737">
    <property type="term" value="C:cytoplasm"/>
    <property type="evidence" value="ECO:0007669"/>
    <property type="project" value="UniProtKB-SubCell"/>
</dbReference>
<dbReference type="GO" id="GO:0005524">
    <property type="term" value="F:ATP binding"/>
    <property type="evidence" value="ECO:0007669"/>
    <property type="project" value="UniProtKB-UniRule"/>
</dbReference>
<dbReference type="GO" id="GO:0004827">
    <property type="term" value="F:proline-tRNA ligase activity"/>
    <property type="evidence" value="ECO:0007669"/>
    <property type="project" value="UniProtKB-UniRule"/>
</dbReference>
<dbReference type="GO" id="GO:0006433">
    <property type="term" value="P:prolyl-tRNA aminoacylation"/>
    <property type="evidence" value="ECO:0007669"/>
    <property type="project" value="UniProtKB-UniRule"/>
</dbReference>
<dbReference type="CDD" id="cd00778">
    <property type="entry name" value="ProRS_core_arch_euk"/>
    <property type="match status" value="1"/>
</dbReference>
<dbReference type="FunFam" id="3.30.930.10:FF:000037">
    <property type="entry name" value="Proline--tRNA ligase"/>
    <property type="match status" value="1"/>
</dbReference>
<dbReference type="Gene3D" id="3.40.50.800">
    <property type="entry name" value="Anticodon-binding domain"/>
    <property type="match status" value="1"/>
</dbReference>
<dbReference type="Gene3D" id="3.30.930.10">
    <property type="entry name" value="Bira Bifunctional Protein, Domain 2"/>
    <property type="match status" value="1"/>
</dbReference>
<dbReference type="Gene3D" id="3.30.110.30">
    <property type="entry name" value="C-terminal domain of ProRS"/>
    <property type="match status" value="1"/>
</dbReference>
<dbReference type="HAMAP" id="MF_01571">
    <property type="entry name" value="Pro_tRNA_synth_type3"/>
    <property type="match status" value="1"/>
</dbReference>
<dbReference type="InterPro" id="IPR002314">
    <property type="entry name" value="aa-tRNA-synt_IIb"/>
</dbReference>
<dbReference type="InterPro" id="IPR006195">
    <property type="entry name" value="aa-tRNA-synth_II"/>
</dbReference>
<dbReference type="InterPro" id="IPR045864">
    <property type="entry name" value="aa-tRNA-synth_II/BPL/LPL"/>
</dbReference>
<dbReference type="InterPro" id="IPR004154">
    <property type="entry name" value="Anticodon-bd"/>
</dbReference>
<dbReference type="InterPro" id="IPR036621">
    <property type="entry name" value="Anticodon-bd_dom_sf"/>
</dbReference>
<dbReference type="InterPro" id="IPR002316">
    <property type="entry name" value="Pro-tRNA-ligase_IIa"/>
</dbReference>
<dbReference type="InterPro" id="IPR004499">
    <property type="entry name" value="Pro-tRNA-ligase_IIa_arc-type"/>
</dbReference>
<dbReference type="InterPro" id="IPR017449">
    <property type="entry name" value="Pro-tRNA_synth_II"/>
</dbReference>
<dbReference type="InterPro" id="IPR015264">
    <property type="entry name" value="Pro-tRNA_synth_II_arc"/>
</dbReference>
<dbReference type="InterPro" id="IPR033721">
    <property type="entry name" value="ProRS_core_arch_euk"/>
</dbReference>
<dbReference type="NCBIfam" id="TIGR00408">
    <property type="entry name" value="proS_fam_I"/>
    <property type="match status" value="1"/>
</dbReference>
<dbReference type="PANTHER" id="PTHR43382:SF2">
    <property type="entry name" value="BIFUNCTIONAL GLUTAMATE_PROLINE--TRNA LIGASE"/>
    <property type="match status" value="1"/>
</dbReference>
<dbReference type="PANTHER" id="PTHR43382">
    <property type="entry name" value="PROLYL-TRNA SYNTHETASE"/>
    <property type="match status" value="1"/>
</dbReference>
<dbReference type="Pfam" id="PF03129">
    <property type="entry name" value="HGTP_anticodon"/>
    <property type="match status" value="1"/>
</dbReference>
<dbReference type="Pfam" id="PF09181">
    <property type="entry name" value="ProRS-C_2"/>
    <property type="match status" value="1"/>
</dbReference>
<dbReference type="Pfam" id="PF00587">
    <property type="entry name" value="tRNA-synt_2b"/>
    <property type="match status" value="1"/>
</dbReference>
<dbReference type="PRINTS" id="PR01046">
    <property type="entry name" value="TRNASYNTHPRO"/>
</dbReference>
<dbReference type="SUPFAM" id="SSF64586">
    <property type="entry name" value="C-terminal domain of ProRS"/>
    <property type="match status" value="1"/>
</dbReference>
<dbReference type="SUPFAM" id="SSF52954">
    <property type="entry name" value="Class II aaRS ABD-related"/>
    <property type="match status" value="1"/>
</dbReference>
<dbReference type="SUPFAM" id="SSF55681">
    <property type="entry name" value="Class II aaRS and biotin synthetases"/>
    <property type="match status" value="1"/>
</dbReference>
<dbReference type="PROSITE" id="PS50862">
    <property type="entry name" value="AA_TRNA_LIGASE_II"/>
    <property type="match status" value="1"/>
</dbReference>
<accession>A6VK03</accession>
<evidence type="ECO:0000255" key="1">
    <source>
        <dbReference type="HAMAP-Rule" id="MF_01571"/>
    </source>
</evidence>
<comment type="function">
    <text evidence="1">Catalyzes the attachment of proline to tRNA(Pro) in a two-step reaction: proline is first activated by ATP to form Pro-AMP and then transferred to the acceptor end of tRNA(Pro).</text>
</comment>
<comment type="catalytic activity">
    <reaction evidence="1">
        <text>tRNA(Pro) + L-proline + ATP = L-prolyl-tRNA(Pro) + AMP + diphosphate</text>
        <dbReference type="Rhea" id="RHEA:14305"/>
        <dbReference type="Rhea" id="RHEA-COMP:9700"/>
        <dbReference type="Rhea" id="RHEA-COMP:9702"/>
        <dbReference type="ChEBI" id="CHEBI:30616"/>
        <dbReference type="ChEBI" id="CHEBI:33019"/>
        <dbReference type="ChEBI" id="CHEBI:60039"/>
        <dbReference type="ChEBI" id="CHEBI:78442"/>
        <dbReference type="ChEBI" id="CHEBI:78532"/>
        <dbReference type="ChEBI" id="CHEBI:456215"/>
        <dbReference type="EC" id="6.1.1.15"/>
    </reaction>
</comment>
<comment type="subunit">
    <text evidence="1">Homodimer.</text>
</comment>
<comment type="subcellular location">
    <subcellularLocation>
        <location evidence="1">Cytoplasm</location>
    </subcellularLocation>
</comment>
<comment type="domain">
    <text evidence="1">Consists of three domains: the N-terminal catalytic domain, the anticodon-binding domain and the C-terminal extension.</text>
</comment>
<comment type="similarity">
    <text evidence="1">Belongs to the class-II aminoacyl-tRNA synthetase family. ProS type 3 subfamily.</text>
</comment>
<reference key="1">
    <citation type="submission" date="2007-06" db="EMBL/GenBank/DDBJ databases">
        <title>Complete sequence of Methanococcus maripaludis C7.</title>
        <authorList>
            <consortium name="US DOE Joint Genome Institute"/>
            <person name="Copeland A."/>
            <person name="Lucas S."/>
            <person name="Lapidus A."/>
            <person name="Barry K."/>
            <person name="Glavina del Rio T."/>
            <person name="Dalin E."/>
            <person name="Tice H."/>
            <person name="Pitluck S."/>
            <person name="Clum A."/>
            <person name="Schmutz J."/>
            <person name="Larimer F."/>
            <person name="Land M."/>
            <person name="Hauser L."/>
            <person name="Kyrpides N."/>
            <person name="Anderson I."/>
            <person name="Sieprawska-Lupa M."/>
            <person name="Whitman W.B."/>
            <person name="Richardson P."/>
        </authorList>
    </citation>
    <scope>NUCLEOTIDE SEQUENCE [LARGE SCALE GENOMIC DNA]</scope>
    <source>
        <strain>C7 / ATCC BAA-1331</strain>
    </source>
</reference>
<keyword id="KW-0030">Aminoacyl-tRNA synthetase</keyword>
<keyword id="KW-0067">ATP-binding</keyword>
<keyword id="KW-0963">Cytoplasm</keyword>
<keyword id="KW-0436">Ligase</keyword>
<keyword id="KW-0547">Nucleotide-binding</keyword>
<keyword id="KW-0648">Protein biosynthesis</keyword>